<evidence type="ECO:0000250" key="1"/>
<evidence type="ECO:0000250" key="2">
    <source>
        <dbReference type="UniProtKB" id="P40848"/>
    </source>
</evidence>
<evidence type="ECO:0000250" key="3">
    <source>
        <dbReference type="UniProtKB" id="Q02792"/>
    </source>
</evidence>
<evidence type="ECO:0000256" key="4">
    <source>
        <dbReference type="SAM" id="MobiDB-lite"/>
    </source>
</evidence>
<evidence type="ECO:0000305" key="5"/>
<proteinExistence type="inferred from homology"/>
<organism>
    <name type="scientific">Kluyveromyces lactis (strain ATCC 8585 / CBS 2359 / DSM 70799 / NBRC 1267 / NRRL Y-1140 / WM37)</name>
    <name type="common">Yeast</name>
    <name type="synonym">Candida sphaerica</name>
    <dbReference type="NCBI Taxonomy" id="284590"/>
    <lineage>
        <taxon>Eukaryota</taxon>
        <taxon>Fungi</taxon>
        <taxon>Dikarya</taxon>
        <taxon>Ascomycota</taxon>
        <taxon>Saccharomycotina</taxon>
        <taxon>Saccharomycetes</taxon>
        <taxon>Saccharomycetales</taxon>
        <taxon>Saccharomycetaceae</taxon>
        <taxon>Kluyveromyces</taxon>
    </lineage>
</organism>
<comment type="function">
    <text evidence="2 3">Possesses 5'-&gt;3' exoribonuclease activity (By similarity). Required for the processing of nuclear mRNA and rRNA precursors. May promote the termination of transcription by RNA polymerase II (By similarity). Essential for vegetative cell growth and chromosome segregation (By similarity).</text>
</comment>
<comment type="subunit">
    <text evidence="2">Interacts with RAI1; the interaction is direct, stabilizes RAT1 protein structure and may stimulate its exoribonuclease activity (By similarity). The interaction also stimulates RAI1 pyrophosphohydrolase activity, probably by recruiting it to mRNA substrates (By similarity).</text>
</comment>
<comment type="subcellular location">
    <subcellularLocation>
        <location evidence="1">Nucleus</location>
    </subcellularLocation>
</comment>
<comment type="similarity">
    <text evidence="5">Belongs to the 5'-3' exonuclease family. XRN2/RAT1 subfamily.</text>
</comment>
<feature type="initiator methionine" description="Removed" evidence="1">
    <location>
        <position position="1"/>
    </location>
</feature>
<feature type="chain" id="PRO_0000249927" description="5'-3' exoribonuclease 2">
    <location>
        <begin position="2"/>
        <end position="992"/>
    </location>
</feature>
<feature type="region of interest" description="Disordered" evidence="4">
    <location>
        <begin position="528"/>
        <end position="568"/>
    </location>
</feature>
<feature type="region of interest" description="Disordered" evidence="4">
    <location>
        <begin position="916"/>
        <end position="992"/>
    </location>
</feature>
<feature type="compositionally biased region" description="Basic and acidic residues" evidence="4">
    <location>
        <begin position="528"/>
        <end position="549"/>
    </location>
</feature>
<feature type="compositionally biased region" description="Acidic residues" evidence="4">
    <location>
        <begin position="550"/>
        <end position="564"/>
    </location>
</feature>
<feature type="compositionally biased region" description="Low complexity" evidence="4">
    <location>
        <begin position="928"/>
        <end position="962"/>
    </location>
</feature>
<feature type="compositionally biased region" description="Low complexity" evidence="4">
    <location>
        <begin position="969"/>
        <end position="983"/>
    </location>
</feature>
<keyword id="KW-0269">Exonuclease</keyword>
<keyword id="KW-0378">Hydrolase</keyword>
<keyword id="KW-0507">mRNA processing</keyword>
<keyword id="KW-0540">Nuclease</keyword>
<keyword id="KW-0539">Nucleus</keyword>
<keyword id="KW-1185">Reference proteome</keyword>
<keyword id="KW-0698">rRNA processing</keyword>
<keyword id="KW-0804">Transcription</keyword>
<keyword id="KW-0805">Transcription regulation</keyword>
<keyword id="KW-0806">Transcription termination</keyword>
<protein>
    <recommendedName>
        <fullName>5'-3' exoribonuclease 2</fullName>
        <ecNumber>3.1.13.-</ecNumber>
    </recommendedName>
</protein>
<reference key="1">
    <citation type="journal article" date="2004" name="Nature">
        <title>Genome evolution in yeasts.</title>
        <authorList>
            <person name="Dujon B."/>
            <person name="Sherman D."/>
            <person name="Fischer G."/>
            <person name="Durrens P."/>
            <person name="Casaregola S."/>
            <person name="Lafontaine I."/>
            <person name="de Montigny J."/>
            <person name="Marck C."/>
            <person name="Neuveglise C."/>
            <person name="Talla E."/>
            <person name="Goffard N."/>
            <person name="Frangeul L."/>
            <person name="Aigle M."/>
            <person name="Anthouard V."/>
            <person name="Babour A."/>
            <person name="Barbe V."/>
            <person name="Barnay S."/>
            <person name="Blanchin S."/>
            <person name="Beckerich J.-M."/>
            <person name="Beyne E."/>
            <person name="Bleykasten C."/>
            <person name="Boisrame A."/>
            <person name="Boyer J."/>
            <person name="Cattolico L."/>
            <person name="Confanioleri F."/>
            <person name="de Daruvar A."/>
            <person name="Despons L."/>
            <person name="Fabre E."/>
            <person name="Fairhead C."/>
            <person name="Ferry-Dumazet H."/>
            <person name="Groppi A."/>
            <person name="Hantraye F."/>
            <person name="Hennequin C."/>
            <person name="Jauniaux N."/>
            <person name="Joyet P."/>
            <person name="Kachouri R."/>
            <person name="Kerrest A."/>
            <person name="Koszul R."/>
            <person name="Lemaire M."/>
            <person name="Lesur I."/>
            <person name="Ma L."/>
            <person name="Muller H."/>
            <person name="Nicaud J.-M."/>
            <person name="Nikolski M."/>
            <person name="Oztas S."/>
            <person name="Ozier-Kalogeropoulos O."/>
            <person name="Pellenz S."/>
            <person name="Potier S."/>
            <person name="Richard G.-F."/>
            <person name="Straub M.-L."/>
            <person name="Suleau A."/>
            <person name="Swennen D."/>
            <person name="Tekaia F."/>
            <person name="Wesolowski-Louvel M."/>
            <person name="Westhof E."/>
            <person name="Wirth B."/>
            <person name="Zeniou-Meyer M."/>
            <person name="Zivanovic Y."/>
            <person name="Bolotin-Fukuhara M."/>
            <person name="Thierry A."/>
            <person name="Bouchier C."/>
            <person name="Caudron B."/>
            <person name="Scarpelli C."/>
            <person name="Gaillardin C."/>
            <person name="Weissenbach J."/>
            <person name="Wincker P."/>
            <person name="Souciet J.-L."/>
        </authorList>
    </citation>
    <scope>NUCLEOTIDE SEQUENCE [LARGE SCALE GENOMIC DNA]</scope>
    <source>
        <strain>ATCC 8585 / CBS 2359 / DSM 70799 / NBRC 1267 / NRRL Y-1140 / WM37</strain>
    </source>
</reference>
<gene>
    <name type="primary">RAT1</name>
    <name type="ordered locus">KLLA0F07469g</name>
</gene>
<sequence>MGVPSFFRWLSRKYPKIISPVLEEYPVIEDGVQLPLDYSSANPNGELDNLYLDMNGIVHPCSHPENKPPPETEDEMLLAVFEYTNRVLNMARPRKVLMIAVDGVAPRAKMNQQRARRFRSARDAKLQNEAREQVLREREDYGETIDENVKSKKTWDSNAITPGTPFMDKLATALRYWTSFKLATDPGWKNLQIIISDATVPGEGEHKIMNFIRSQRADTQYNPNTTHCIYGLDADLIFLGLATHEPHFKILREDVFANNNYKKPKPQDMINLSEEEKQQLIQQDSEKPFLWLHISVLREYLSAELAIPHLSFQFDFERAIDDWVFMCFFCGNDFLPHLPCLDVRENSIDILVDIWKTVLPKTKTYLTCDGTLNLEPVEALLEQLGDRETDLFKKKYIQEVRKQEAHDRRKKLKSNPNVSQGKVDRNFMIPLENMPVYDVDGNAAEGSLNLSNKDFANMRKEINLANEGDGEAAKALKLKSEKNSGVVEFSSEELKNSVQLSKTANYDAATSLQEKLIAKKMAMRDEENAEELSLKRKSEDVDSAEKETSNEPEDDEADYDEDEGSTVPPAVIHTGIVKSGFIDTDESVRLYEPGYHDRYYQHKFHVPAKDIPALQKDVIRCYVEGISWVLLYYYQGCASWTWYYPYHYAPFAQDFKNIKNLDIHFDLGEPFLPYEQLMSVLPAASGHALPEIFRPLMSDPNSEIIDFYPEEFPVDMNGKKMAWQGIALLPFIDETRLLKTVREQYSKLSDSEKARNVRKKDALLISNKNVNYDLFMKNLYGENPVNVIEFRHFKSGLSGFVTQAEEGFELNSKLICPINGGGLPDLSTNLFLKLSYTQPVVAGRCKSLVLNGYIPPQPMLTPQDRDCIIYKYSNRWNPSMMKYNIVPVGPSGITQYQPRVGGYRSFFFHKEQTAYAQQPQQNREYMHSQQRQPQGSRYQQSRYNNGNYNNSNNGYSDNNNGNTGKYNRHYNNSRGNSNRYSNSNDRRREFRR</sequence>
<accession>Q6CKX0</accession>
<name>XRN2_KLULA</name>
<dbReference type="EC" id="3.1.13.-"/>
<dbReference type="EMBL" id="CR382126">
    <property type="protein sequence ID" value="CAG98127.1"/>
    <property type="molecule type" value="Genomic_DNA"/>
</dbReference>
<dbReference type="RefSeq" id="XP_455419.1">
    <property type="nucleotide sequence ID" value="XM_455419.1"/>
</dbReference>
<dbReference type="SMR" id="Q6CKX0"/>
<dbReference type="FunCoup" id="Q6CKX0">
    <property type="interactions" value="1163"/>
</dbReference>
<dbReference type="STRING" id="284590.Q6CKX0"/>
<dbReference type="PaxDb" id="284590-Q6CKX0"/>
<dbReference type="KEGG" id="kla:KLLA0_F07469g"/>
<dbReference type="eggNOG" id="KOG2044">
    <property type="taxonomic scope" value="Eukaryota"/>
</dbReference>
<dbReference type="HOGENOM" id="CLU_006038_1_1_1"/>
<dbReference type="InParanoid" id="Q6CKX0"/>
<dbReference type="OMA" id="ITHDMVV"/>
<dbReference type="Proteomes" id="UP000000598">
    <property type="component" value="Chromosome F"/>
</dbReference>
<dbReference type="GO" id="GO:0005634">
    <property type="term" value="C:nucleus"/>
    <property type="evidence" value="ECO:0007669"/>
    <property type="project" value="UniProtKB-SubCell"/>
</dbReference>
<dbReference type="GO" id="GO:0004534">
    <property type="term" value="F:5'-3' RNA exonuclease activity"/>
    <property type="evidence" value="ECO:0007669"/>
    <property type="project" value="InterPro"/>
</dbReference>
<dbReference type="GO" id="GO:0003723">
    <property type="term" value="F:RNA binding"/>
    <property type="evidence" value="ECO:0007669"/>
    <property type="project" value="TreeGrafter"/>
</dbReference>
<dbReference type="GO" id="GO:0006353">
    <property type="term" value="P:DNA-templated transcription termination"/>
    <property type="evidence" value="ECO:0007669"/>
    <property type="project" value="UniProtKB-KW"/>
</dbReference>
<dbReference type="GO" id="GO:0006397">
    <property type="term" value="P:mRNA processing"/>
    <property type="evidence" value="ECO:0007669"/>
    <property type="project" value="UniProtKB-KW"/>
</dbReference>
<dbReference type="GO" id="GO:0000956">
    <property type="term" value="P:nuclear-transcribed mRNA catabolic process"/>
    <property type="evidence" value="ECO:0007669"/>
    <property type="project" value="TreeGrafter"/>
</dbReference>
<dbReference type="GO" id="GO:0006364">
    <property type="term" value="P:rRNA processing"/>
    <property type="evidence" value="ECO:0007669"/>
    <property type="project" value="UniProtKB-KW"/>
</dbReference>
<dbReference type="CDD" id="cd18673">
    <property type="entry name" value="PIN_XRN1-2-like"/>
    <property type="match status" value="1"/>
</dbReference>
<dbReference type="FunFam" id="1.25.40.1050:FF:000002">
    <property type="entry name" value="5'-3' exoribonuclease"/>
    <property type="match status" value="1"/>
</dbReference>
<dbReference type="FunFam" id="3.40.50.12390:FF:000003">
    <property type="entry name" value="5'-3' exoribonuclease"/>
    <property type="match status" value="1"/>
</dbReference>
<dbReference type="FunFam" id="3.40.50.12390:FF:000005">
    <property type="entry name" value="5'-3' exoribonuclease 2"/>
    <property type="match status" value="1"/>
</dbReference>
<dbReference type="Gene3D" id="1.25.40.1050">
    <property type="match status" value="1"/>
</dbReference>
<dbReference type="Gene3D" id="3.40.50.12390">
    <property type="match status" value="1"/>
</dbReference>
<dbReference type="InterPro" id="IPR027073">
    <property type="entry name" value="5_3_exoribonuclease"/>
</dbReference>
<dbReference type="InterPro" id="IPR041412">
    <property type="entry name" value="Xrn1_helical"/>
</dbReference>
<dbReference type="InterPro" id="IPR004859">
    <property type="entry name" value="Xrn1_N"/>
</dbReference>
<dbReference type="InterPro" id="IPR017151">
    <property type="entry name" value="Xrn2/3/4"/>
</dbReference>
<dbReference type="PANTHER" id="PTHR12341:SF41">
    <property type="entry name" value="5'-3' EXORIBONUCLEASE 2"/>
    <property type="match status" value="1"/>
</dbReference>
<dbReference type="PANTHER" id="PTHR12341">
    <property type="entry name" value="5'-&gt;3' EXORIBONUCLEASE"/>
    <property type="match status" value="1"/>
</dbReference>
<dbReference type="Pfam" id="PF17846">
    <property type="entry name" value="XRN_M"/>
    <property type="match status" value="2"/>
</dbReference>
<dbReference type="Pfam" id="PF03159">
    <property type="entry name" value="XRN_N"/>
    <property type="match status" value="1"/>
</dbReference>
<dbReference type="PIRSF" id="PIRSF037239">
    <property type="entry name" value="Exonuclease_Xrn2"/>
    <property type="match status" value="1"/>
</dbReference>